<comment type="function">
    <text evidence="1">Endonuclease IV plays a role in DNA repair. It cleaves phosphodiester bonds at apurinic or apyrimidinic (AP) sites, generating a 3'-hydroxyl group and a 5'-terminal sugar phosphate.</text>
</comment>
<comment type="catalytic activity">
    <reaction evidence="1">
        <text>Endonucleolytic cleavage to 5'-phosphooligonucleotide end-products.</text>
        <dbReference type="EC" id="3.1.21.2"/>
    </reaction>
</comment>
<comment type="cofactor">
    <cofactor evidence="1">
        <name>Zn(2+)</name>
        <dbReference type="ChEBI" id="CHEBI:29105"/>
    </cofactor>
    <text evidence="1">Binds 3 Zn(2+) ions.</text>
</comment>
<comment type="similarity">
    <text evidence="1">Belongs to the AP endonuclease 2 family.</text>
</comment>
<sequence length="282" mass="31062">MKYIGAHVSAAGGLDQAPARAHALEATAFALFTKNQRQWKAAPLTDDAIDAFRAACTRYGYQSQQILPHDSYLINLGHPVTEALEKSRGAFIDEMQRCADLGLTLLNFHPGSHLLQIDERDCLSRIAESINLALSQTQGVCAVIENTAGQGSNLGFRFEQLAAIIEQVEDKSRVGVCIDTCHAFAAGYDLRDEAACGETFAQFSRTVGFSYLRGMHLNDAKSAFNSRVDRHQSLGEGNIGDAAFRWIMRDPRFDGIPLILETTDPGRWQDEIAWLKAQQTAE</sequence>
<evidence type="ECO:0000255" key="1">
    <source>
        <dbReference type="HAMAP-Rule" id="MF_00152"/>
    </source>
</evidence>
<accession>C5BCN2</accession>
<reference key="1">
    <citation type="submission" date="2009-03" db="EMBL/GenBank/DDBJ databases">
        <title>Complete genome sequence of Edwardsiella ictaluri 93-146.</title>
        <authorList>
            <person name="Williams M.L."/>
            <person name="Gillaspy A.F."/>
            <person name="Dyer D.W."/>
            <person name="Thune R.L."/>
            <person name="Waldbieser G.C."/>
            <person name="Schuster S.C."/>
            <person name="Gipson J."/>
            <person name="Zaitshik J."/>
            <person name="Landry C."/>
            <person name="Lawrence M.L."/>
        </authorList>
    </citation>
    <scope>NUCLEOTIDE SEQUENCE [LARGE SCALE GENOMIC DNA]</scope>
    <source>
        <strain>93-146</strain>
    </source>
</reference>
<proteinExistence type="inferred from homology"/>
<feature type="chain" id="PRO_1000203438" description="Probable endonuclease 4">
    <location>
        <begin position="1"/>
        <end position="282"/>
    </location>
</feature>
<feature type="binding site" evidence="1">
    <location>
        <position position="69"/>
    </location>
    <ligand>
        <name>Zn(2+)</name>
        <dbReference type="ChEBI" id="CHEBI:29105"/>
        <label>1</label>
    </ligand>
</feature>
<feature type="binding site" evidence="1">
    <location>
        <position position="109"/>
    </location>
    <ligand>
        <name>Zn(2+)</name>
        <dbReference type="ChEBI" id="CHEBI:29105"/>
        <label>1</label>
    </ligand>
</feature>
<feature type="binding site" evidence="1">
    <location>
        <position position="145"/>
    </location>
    <ligand>
        <name>Zn(2+)</name>
        <dbReference type="ChEBI" id="CHEBI:29105"/>
        <label>1</label>
    </ligand>
</feature>
<feature type="binding site" evidence="1">
    <location>
        <position position="145"/>
    </location>
    <ligand>
        <name>Zn(2+)</name>
        <dbReference type="ChEBI" id="CHEBI:29105"/>
        <label>2</label>
    </ligand>
</feature>
<feature type="binding site" evidence="1">
    <location>
        <position position="179"/>
    </location>
    <ligand>
        <name>Zn(2+)</name>
        <dbReference type="ChEBI" id="CHEBI:29105"/>
        <label>2</label>
    </ligand>
</feature>
<feature type="binding site" evidence="1">
    <location>
        <position position="182"/>
    </location>
    <ligand>
        <name>Zn(2+)</name>
        <dbReference type="ChEBI" id="CHEBI:29105"/>
        <label>3</label>
    </ligand>
</feature>
<feature type="binding site" evidence="1">
    <location>
        <position position="216"/>
    </location>
    <ligand>
        <name>Zn(2+)</name>
        <dbReference type="ChEBI" id="CHEBI:29105"/>
        <label>2</label>
    </ligand>
</feature>
<feature type="binding site" evidence="1">
    <location>
        <position position="229"/>
    </location>
    <ligand>
        <name>Zn(2+)</name>
        <dbReference type="ChEBI" id="CHEBI:29105"/>
        <label>3</label>
    </ligand>
</feature>
<feature type="binding site" evidence="1">
    <location>
        <position position="231"/>
    </location>
    <ligand>
        <name>Zn(2+)</name>
        <dbReference type="ChEBI" id="CHEBI:29105"/>
        <label>3</label>
    </ligand>
</feature>
<feature type="binding site" evidence="1">
    <location>
        <position position="261"/>
    </location>
    <ligand>
        <name>Zn(2+)</name>
        <dbReference type="ChEBI" id="CHEBI:29105"/>
        <label>2</label>
    </ligand>
</feature>
<name>END4_EDWI9</name>
<gene>
    <name evidence="1" type="primary">nfo</name>
    <name type="ordered locus">NT01EI_1290</name>
</gene>
<keyword id="KW-0227">DNA damage</keyword>
<keyword id="KW-0234">DNA repair</keyword>
<keyword id="KW-0255">Endonuclease</keyword>
<keyword id="KW-0378">Hydrolase</keyword>
<keyword id="KW-0479">Metal-binding</keyword>
<keyword id="KW-0540">Nuclease</keyword>
<keyword id="KW-0862">Zinc</keyword>
<protein>
    <recommendedName>
        <fullName evidence="1">Probable endonuclease 4</fullName>
        <ecNumber evidence="1">3.1.21.2</ecNumber>
    </recommendedName>
    <alternativeName>
        <fullName evidence="1">Endodeoxyribonuclease IV</fullName>
    </alternativeName>
    <alternativeName>
        <fullName evidence="1">Endonuclease IV</fullName>
    </alternativeName>
</protein>
<organism>
    <name type="scientific">Edwardsiella ictaluri (strain 93-146)</name>
    <dbReference type="NCBI Taxonomy" id="634503"/>
    <lineage>
        <taxon>Bacteria</taxon>
        <taxon>Pseudomonadati</taxon>
        <taxon>Pseudomonadota</taxon>
        <taxon>Gammaproteobacteria</taxon>
        <taxon>Enterobacterales</taxon>
        <taxon>Hafniaceae</taxon>
        <taxon>Edwardsiella</taxon>
    </lineage>
</organism>
<dbReference type="EC" id="3.1.21.2" evidence="1"/>
<dbReference type="EMBL" id="CP001600">
    <property type="protein sequence ID" value="ACR68487.1"/>
    <property type="molecule type" value="Genomic_DNA"/>
</dbReference>
<dbReference type="RefSeq" id="WP_015870654.1">
    <property type="nucleotide sequence ID" value="NZ_CP169062.1"/>
</dbReference>
<dbReference type="SMR" id="C5BCN2"/>
<dbReference type="STRING" id="67780.B6E78_16705"/>
<dbReference type="GeneID" id="69538305"/>
<dbReference type="KEGG" id="eic:NT01EI_1290"/>
<dbReference type="PATRIC" id="fig|634503.3.peg.1165"/>
<dbReference type="HOGENOM" id="CLU_025885_0_4_6"/>
<dbReference type="OrthoDB" id="9805666at2"/>
<dbReference type="Proteomes" id="UP000001485">
    <property type="component" value="Chromosome"/>
</dbReference>
<dbReference type="GO" id="GO:0008833">
    <property type="term" value="F:deoxyribonuclease IV (phage-T4-induced) activity"/>
    <property type="evidence" value="ECO:0007669"/>
    <property type="project" value="UniProtKB-UniRule"/>
</dbReference>
<dbReference type="GO" id="GO:0003677">
    <property type="term" value="F:DNA binding"/>
    <property type="evidence" value="ECO:0007669"/>
    <property type="project" value="InterPro"/>
</dbReference>
<dbReference type="GO" id="GO:0003906">
    <property type="term" value="F:DNA-(apurinic or apyrimidinic site) endonuclease activity"/>
    <property type="evidence" value="ECO:0007669"/>
    <property type="project" value="TreeGrafter"/>
</dbReference>
<dbReference type="GO" id="GO:0008081">
    <property type="term" value="F:phosphoric diester hydrolase activity"/>
    <property type="evidence" value="ECO:0007669"/>
    <property type="project" value="TreeGrafter"/>
</dbReference>
<dbReference type="GO" id="GO:0008270">
    <property type="term" value="F:zinc ion binding"/>
    <property type="evidence" value="ECO:0007669"/>
    <property type="project" value="UniProtKB-UniRule"/>
</dbReference>
<dbReference type="GO" id="GO:0006284">
    <property type="term" value="P:base-excision repair"/>
    <property type="evidence" value="ECO:0007669"/>
    <property type="project" value="TreeGrafter"/>
</dbReference>
<dbReference type="CDD" id="cd00019">
    <property type="entry name" value="AP2Ec"/>
    <property type="match status" value="1"/>
</dbReference>
<dbReference type="FunFam" id="3.20.20.150:FF:000001">
    <property type="entry name" value="Probable endonuclease 4"/>
    <property type="match status" value="1"/>
</dbReference>
<dbReference type="Gene3D" id="3.20.20.150">
    <property type="entry name" value="Divalent-metal-dependent TIM barrel enzymes"/>
    <property type="match status" value="1"/>
</dbReference>
<dbReference type="HAMAP" id="MF_00152">
    <property type="entry name" value="Nfo"/>
    <property type="match status" value="1"/>
</dbReference>
<dbReference type="InterPro" id="IPR001719">
    <property type="entry name" value="AP_endonuc_2"/>
</dbReference>
<dbReference type="InterPro" id="IPR018246">
    <property type="entry name" value="AP_endonuc_F2_Zn_BS"/>
</dbReference>
<dbReference type="InterPro" id="IPR036237">
    <property type="entry name" value="Xyl_isomerase-like_sf"/>
</dbReference>
<dbReference type="InterPro" id="IPR013022">
    <property type="entry name" value="Xyl_isomerase-like_TIM-brl"/>
</dbReference>
<dbReference type="NCBIfam" id="TIGR00587">
    <property type="entry name" value="nfo"/>
    <property type="match status" value="1"/>
</dbReference>
<dbReference type="NCBIfam" id="NF002199">
    <property type="entry name" value="PRK01060.1-4"/>
    <property type="match status" value="1"/>
</dbReference>
<dbReference type="PANTHER" id="PTHR21445:SF0">
    <property type="entry name" value="APURINIC-APYRIMIDINIC ENDONUCLEASE"/>
    <property type="match status" value="1"/>
</dbReference>
<dbReference type="PANTHER" id="PTHR21445">
    <property type="entry name" value="ENDONUCLEASE IV ENDODEOXYRIBONUCLEASE IV"/>
    <property type="match status" value="1"/>
</dbReference>
<dbReference type="Pfam" id="PF01261">
    <property type="entry name" value="AP_endonuc_2"/>
    <property type="match status" value="1"/>
</dbReference>
<dbReference type="SMART" id="SM00518">
    <property type="entry name" value="AP2Ec"/>
    <property type="match status" value="1"/>
</dbReference>
<dbReference type="SUPFAM" id="SSF51658">
    <property type="entry name" value="Xylose isomerase-like"/>
    <property type="match status" value="1"/>
</dbReference>
<dbReference type="PROSITE" id="PS00729">
    <property type="entry name" value="AP_NUCLEASE_F2_1"/>
    <property type="match status" value="1"/>
</dbReference>
<dbReference type="PROSITE" id="PS00730">
    <property type="entry name" value="AP_NUCLEASE_F2_2"/>
    <property type="match status" value="1"/>
</dbReference>
<dbReference type="PROSITE" id="PS00731">
    <property type="entry name" value="AP_NUCLEASE_F2_3"/>
    <property type="match status" value="1"/>
</dbReference>
<dbReference type="PROSITE" id="PS51432">
    <property type="entry name" value="AP_NUCLEASE_F2_4"/>
    <property type="match status" value="1"/>
</dbReference>